<protein>
    <recommendedName>
        <fullName>Actin-related protein 3B</fullName>
    </recommendedName>
    <alternativeName>
        <fullName>ARP3-beta</fullName>
    </alternativeName>
    <alternativeName>
        <fullName>Actin-like protein 3B</fullName>
    </alternativeName>
    <alternativeName>
        <fullName>Actin-related protein ARP4</fullName>
    </alternativeName>
</protein>
<organism>
    <name type="scientific">Homo sapiens</name>
    <name type="common">Human</name>
    <dbReference type="NCBI Taxonomy" id="9606"/>
    <lineage>
        <taxon>Eukaryota</taxon>
        <taxon>Metazoa</taxon>
        <taxon>Chordata</taxon>
        <taxon>Craniata</taxon>
        <taxon>Vertebrata</taxon>
        <taxon>Euteleostomi</taxon>
        <taxon>Mammalia</taxon>
        <taxon>Eutheria</taxon>
        <taxon>Euarchontoglires</taxon>
        <taxon>Primates</taxon>
        <taxon>Haplorrhini</taxon>
        <taxon>Catarrhini</taxon>
        <taxon>Hominidae</taxon>
        <taxon>Homo</taxon>
    </lineage>
</organism>
<dbReference type="EMBL" id="AF023453">
    <property type="protein sequence ID" value="AAC98904.1"/>
    <property type="molecule type" value="mRNA"/>
</dbReference>
<dbReference type="EMBL" id="AF086920">
    <property type="protein sequence ID" value="AAP97150.1"/>
    <property type="status" value="ALT_SEQ"/>
    <property type="molecule type" value="mRNA"/>
</dbReference>
<dbReference type="EMBL" id="AK294292">
    <property type="protein sequence ID" value="BAG57575.1"/>
    <property type="molecule type" value="mRNA"/>
</dbReference>
<dbReference type="EMBL" id="AK315534">
    <property type="protein sequence ID" value="BAG37914.1"/>
    <property type="molecule type" value="mRNA"/>
</dbReference>
<dbReference type="EMBL" id="AC072057">
    <property type="status" value="NOT_ANNOTATED_CDS"/>
    <property type="molecule type" value="Genomic_DNA"/>
</dbReference>
<dbReference type="EMBL" id="AC092180">
    <property type="status" value="NOT_ANNOTATED_CDS"/>
    <property type="molecule type" value="Genomic_DNA"/>
</dbReference>
<dbReference type="EMBL" id="BC015207">
    <property type="protein sequence ID" value="AAH15207.1"/>
    <property type="molecule type" value="mRNA"/>
</dbReference>
<dbReference type="EMBL" id="BC008682">
    <property type="protein sequence ID" value="AAH08682.1"/>
    <property type="molecule type" value="mRNA"/>
</dbReference>
<dbReference type="CCDS" id="CCDS34782.1">
    <molecule id="Q9P1U1-3"/>
</dbReference>
<dbReference type="CCDS" id="CCDS5934.1">
    <molecule id="Q9P1U1-1"/>
</dbReference>
<dbReference type="CCDS" id="CCDS87568.1">
    <molecule id="Q9P1U1-2"/>
</dbReference>
<dbReference type="RefSeq" id="NP_001035225.1">
    <molecule id="Q9P1U1-3"/>
    <property type="nucleotide sequence ID" value="NM_001040135.3"/>
</dbReference>
<dbReference type="RefSeq" id="NP_001337869.1">
    <molecule id="Q9P1U1-2"/>
    <property type="nucleotide sequence ID" value="NM_001350940.2"/>
</dbReference>
<dbReference type="RefSeq" id="NP_001337870.1">
    <molecule id="Q9P1U1-2"/>
    <property type="nucleotide sequence ID" value="NM_001350941.2"/>
</dbReference>
<dbReference type="RefSeq" id="NP_001337871.1">
    <molecule id="Q9P1U1-2"/>
    <property type="nucleotide sequence ID" value="NM_001350942.2"/>
</dbReference>
<dbReference type="RefSeq" id="NP_001337872.1">
    <molecule id="Q9P1U1-2"/>
    <property type="nucleotide sequence ID" value="NM_001350943.2"/>
</dbReference>
<dbReference type="RefSeq" id="NP_065178.1">
    <molecule id="Q9P1U1-1"/>
    <property type="nucleotide sequence ID" value="NM_020445.6"/>
</dbReference>
<dbReference type="SMR" id="Q9P1U1"/>
<dbReference type="BioGRID" id="121429">
    <property type="interactions" value="151"/>
</dbReference>
<dbReference type="ComplexPortal" id="CPX-2490">
    <property type="entry name" value="Actin-related protein 2/3 complex, ARPC1A-ACTR3B-ARPC5 variant"/>
</dbReference>
<dbReference type="ComplexPortal" id="CPX-2580">
    <property type="entry name" value="Actin-related protein 2/3 complex, ARPC1B-ACTR3B-ARPC5L variant"/>
</dbReference>
<dbReference type="ComplexPortal" id="CPX-2583">
    <property type="entry name" value="Actin-related protein 2/3 complex, ARPC1B-ACTR3B-ARPC5 variant"/>
</dbReference>
<dbReference type="ComplexPortal" id="CPX-2668">
    <property type="entry name" value="Actin-related protein 2/3 complex, ARPC1B-ACTR3B-ARPC5L variant"/>
</dbReference>
<dbReference type="FunCoup" id="Q9P1U1">
    <property type="interactions" value="692"/>
</dbReference>
<dbReference type="IntAct" id="Q9P1U1">
    <property type="interactions" value="45"/>
</dbReference>
<dbReference type="MINT" id="Q9P1U1"/>
<dbReference type="STRING" id="9606.ENSP00000256001"/>
<dbReference type="GlyGen" id="Q9P1U1">
    <property type="glycosylation" value="1 site, 1 O-linked glycan (1 site)"/>
</dbReference>
<dbReference type="iPTMnet" id="Q9P1U1"/>
<dbReference type="MetOSite" id="Q9P1U1"/>
<dbReference type="PhosphoSitePlus" id="Q9P1U1"/>
<dbReference type="SwissPalm" id="Q9P1U1"/>
<dbReference type="BioMuta" id="ACTR3B"/>
<dbReference type="DMDM" id="74753111"/>
<dbReference type="jPOST" id="Q9P1U1"/>
<dbReference type="MassIVE" id="Q9P1U1"/>
<dbReference type="PaxDb" id="9606-ENSP00000256001"/>
<dbReference type="PeptideAtlas" id="Q9P1U1"/>
<dbReference type="ProteomicsDB" id="83666">
    <molecule id="Q9P1U1-1"/>
</dbReference>
<dbReference type="ProteomicsDB" id="83667">
    <molecule id="Q9P1U1-2"/>
</dbReference>
<dbReference type="ProteomicsDB" id="83668">
    <molecule id="Q9P1U1-3"/>
</dbReference>
<dbReference type="Pumba" id="Q9P1U1"/>
<dbReference type="Antibodypedia" id="33062">
    <property type="antibodies" value="191 antibodies from 26 providers"/>
</dbReference>
<dbReference type="DNASU" id="57180"/>
<dbReference type="Ensembl" id="ENST00000256001.13">
    <molecule id="Q9P1U1-1"/>
    <property type="protein sequence ID" value="ENSP00000256001.8"/>
    <property type="gene ID" value="ENSG00000133627.18"/>
</dbReference>
<dbReference type="Ensembl" id="ENST00000377776.7">
    <molecule id="Q9P1U1-3"/>
    <property type="protein sequence ID" value="ENSP00000367007.3"/>
    <property type="gene ID" value="ENSG00000133627.18"/>
</dbReference>
<dbReference type="Ensembl" id="ENST00000397282.2">
    <molecule id="Q9P1U1-2"/>
    <property type="protein sequence ID" value="ENSP00000380452.2"/>
    <property type="gene ID" value="ENSG00000133627.18"/>
</dbReference>
<dbReference type="GeneID" id="57180"/>
<dbReference type="KEGG" id="hsa:57180"/>
<dbReference type="MANE-Select" id="ENST00000256001.13">
    <property type="protein sequence ID" value="ENSP00000256001.8"/>
    <property type="RefSeq nucleotide sequence ID" value="NM_020445.6"/>
    <property type="RefSeq protein sequence ID" value="NP_065178.1"/>
</dbReference>
<dbReference type="UCSC" id="uc003wle.3">
    <molecule id="Q9P1U1-1"/>
    <property type="organism name" value="human"/>
</dbReference>
<dbReference type="AGR" id="HGNC:17256"/>
<dbReference type="CTD" id="57180"/>
<dbReference type="DisGeNET" id="57180"/>
<dbReference type="GeneCards" id="ACTR3B"/>
<dbReference type="HGNC" id="HGNC:17256">
    <property type="gene designation" value="ACTR3B"/>
</dbReference>
<dbReference type="HPA" id="ENSG00000133627">
    <property type="expression patterns" value="Tissue enhanced (brain)"/>
</dbReference>
<dbReference type="neXtProt" id="NX_Q9P1U1"/>
<dbReference type="OpenTargets" id="ENSG00000133627"/>
<dbReference type="PharmGKB" id="PA142672645"/>
<dbReference type="VEuPathDB" id="HostDB:ENSG00000133627"/>
<dbReference type="eggNOG" id="KOG0678">
    <property type="taxonomic scope" value="Eukaryota"/>
</dbReference>
<dbReference type="GeneTree" id="ENSGT00940000158304"/>
<dbReference type="HOGENOM" id="CLU_027965_3_2_1"/>
<dbReference type="InParanoid" id="Q9P1U1"/>
<dbReference type="OMA" id="DVMEEYW"/>
<dbReference type="OrthoDB" id="421448at2759"/>
<dbReference type="PAN-GO" id="Q9P1U1">
    <property type="GO annotations" value="2 GO annotations based on evolutionary models"/>
</dbReference>
<dbReference type="PhylomeDB" id="Q9P1U1"/>
<dbReference type="TreeFam" id="TF300644"/>
<dbReference type="PathwayCommons" id="Q9P1U1"/>
<dbReference type="SignaLink" id="Q9P1U1"/>
<dbReference type="BioGRID-ORCS" id="57180">
    <property type="hits" value="15 hits in 1162 CRISPR screens"/>
</dbReference>
<dbReference type="ChiTaRS" id="ACTR3B">
    <property type="organism name" value="human"/>
</dbReference>
<dbReference type="GeneWiki" id="ACTR3B"/>
<dbReference type="GenomeRNAi" id="57180"/>
<dbReference type="Pharos" id="Q9P1U1">
    <property type="development level" value="Tbio"/>
</dbReference>
<dbReference type="PRO" id="PR:Q9P1U1"/>
<dbReference type="Proteomes" id="UP000005640">
    <property type="component" value="Chromosome 7"/>
</dbReference>
<dbReference type="RNAct" id="Q9P1U1">
    <property type="molecule type" value="protein"/>
</dbReference>
<dbReference type="Bgee" id="ENSG00000133627">
    <property type="expression patterns" value="Expressed in cortical plate and 158 other cell types or tissues"/>
</dbReference>
<dbReference type="GO" id="GO:0042995">
    <property type="term" value="C:cell projection"/>
    <property type="evidence" value="ECO:0007669"/>
    <property type="project" value="UniProtKB-SubCell"/>
</dbReference>
<dbReference type="GO" id="GO:0005737">
    <property type="term" value="C:cytoplasm"/>
    <property type="evidence" value="ECO:0007669"/>
    <property type="project" value="UniProtKB-KW"/>
</dbReference>
<dbReference type="GO" id="GO:0005856">
    <property type="term" value="C:cytoskeleton"/>
    <property type="evidence" value="ECO:0007669"/>
    <property type="project" value="UniProtKB-SubCell"/>
</dbReference>
<dbReference type="GO" id="GO:0070062">
    <property type="term" value="C:extracellular exosome"/>
    <property type="evidence" value="ECO:0007005"/>
    <property type="project" value="UniProtKB"/>
</dbReference>
<dbReference type="GO" id="GO:0003779">
    <property type="term" value="F:actin binding"/>
    <property type="evidence" value="ECO:0007669"/>
    <property type="project" value="UniProtKB-KW"/>
</dbReference>
<dbReference type="GO" id="GO:0005524">
    <property type="term" value="F:ATP binding"/>
    <property type="evidence" value="ECO:0007669"/>
    <property type="project" value="UniProtKB-KW"/>
</dbReference>
<dbReference type="CDD" id="cd10221">
    <property type="entry name" value="ASKHA_NBD_Arp3-like"/>
    <property type="match status" value="1"/>
</dbReference>
<dbReference type="FunFam" id="3.30.420.40:FF:000029">
    <property type="entry name" value="Actin-related protein 3"/>
    <property type="match status" value="1"/>
</dbReference>
<dbReference type="FunFam" id="3.30.420.40:FF:000315">
    <property type="entry name" value="Actin-related protein 3"/>
    <property type="match status" value="1"/>
</dbReference>
<dbReference type="FunFam" id="3.30.420.40:FF:000803">
    <property type="entry name" value="Actin-related protein 3"/>
    <property type="match status" value="1"/>
</dbReference>
<dbReference type="FunFam" id="3.90.640.10:FF:000006">
    <property type="entry name" value="Actin-related protein 3 (ARP3)"/>
    <property type="match status" value="1"/>
</dbReference>
<dbReference type="FunFam" id="2.30.36.70:FF:000002">
    <property type="entry name" value="actin-related protein 3 isoform X1"/>
    <property type="match status" value="1"/>
</dbReference>
<dbReference type="Gene3D" id="3.30.420.40">
    <property type="match status" value="2"/>
</dbReference>
<dbReference type="Gene3D" id="2.30.36.70">
    <property type="entry name" value="Actin, Chain A, domain 2"/>
    <property type="match status" value="1"/>
</dbReference>
<dbReference type="Gene3D" id="3.90.640.10">
    <property type="entry name" value="Actin, Chain A, domain 4"/>
    <property type="match status" value="1"/>
</dbReference>
<dbReference type="InterPro" id="IPR004000">
    <property type="entry name" value="Actin"/>
</dbReference>
<dbReference type="InterPro" id="IPR020902">
    <property type="entry name" value="Actin/actin-like_CS"/>
</dbReference>
<dbReference type="InterPro" id="IPR043129">
    <property type="entry name" value="ATPase_NBD"/>
</dbReference>
<dbReference type="PANTHER" id="PTHR11937">
    <property type="entry name" value="ACTIN"/>
    <property type="match status" value="1"/>
</dbReference>
<dbReference type="Pfam" id="PF00022">
    <property type="entry name" value="Actin"/>
    <property type="match status" value="1"/>
</dbReference>
<dbReference type="SMART" id="SM00268">
    <property type="entry name" value="ACTIN"/>
    <property type="match status" value="1"/>
</dbReference>
<dbReference type="SUPFAM" id="SSF53067">
    <property type="entry name" value="Actin-like ATPase domain"/>
    <property type="match status" value="2"/>
</dbReference>
<dbReference type="PROSITE" id="PS01132">
    <property type="entry name" value="ACTINS_ACT_LIKE"/>
    <property type="match status" value="1"/>
</dbReference>
<evidence type="ECO:0000250" key="1"/>
<evidence type="ECO:0000269" key="2">
    <source>
    </source>
</evidence>
<evidence type="ECO:0000269" key="3">
    <source>
    </source>
</evidence>
<evidence type="ECO:0000269" key="4">
    <source>
    </source>
</evidence>
<evidence type="ECO:0000303" key="5">
    <source>
    </source>
</evidence>
<evidence type="ECO:0000303" key="6">
    <source>
    </source>
</evidence>
<evidence type="ECO:0000303" key="7">
    <source ref="2"/>
</evidence>
<evidence type="ECO:0000305" key="8"/>
<accession>Q9P1U1</accession>
<accession>A8MTG1</accession>
<accession>B4DFW4</accession>
<accession>Q7Z526</accession>
<accession>Q96BT2</accession>
<name>ARP3B_HUMAN</name>
<comment type="function">
    <text evidence="4">Plays a role in the organization of the actin cytoskeleton. May function as ATP-binding component of the Arp2/3 complex which is involved in regulation of actin polymerization and together with an activating nucleation-promoting factor (NPF) mediates the formation of branched actin networks. May decrease the metastatic potential of tumors.</text>
</comment>
<comment type="subunit">
    <text>Interacts with the Arp2/3 complex composed of ARP2, ARP3, ARPC1B, ARPC1B/p41-ARC, ARPC2/p34-ARC, ARPC3/p21-ARC, ARPC4/p20-ARC and ARPC5/p16-ARC.</text>
</comment>
<comment type="subcellular location">
    <subcellularLocation>
        <location evidence="1">Cytoplasm</location>
        <location evidence="1">Cytoskeleton</location>
    </subcellularLocation>
    <subcellularLocation>
        <location evidence="1">Cell projection</location>
    </subcellularLocation>
</comment>
<comment type="alternative products">
    <event type="alternative splicing"/>
    <isoform>
        <id>Q9P1U1-1</id>
        <name>1</name>
        <sequence type="displayed"/>
    </isoform>
    <isoform>
        <id>Q9P1U1-2</id>
        <name>2</name>
        <sequence type="described" ref="VSP_034418"/>
    </isoform>
    <isoform>
        <id>Q9P1U1-3</id>
        <name>3</name>
        <sequence type="described" ref="VSP_041474"/>
    </isoform>
</comment>
<comment type="tissue specificity">
    <text evidence="2 3">Detected in fetal brain. Detected throughout the adult brain, in neurons from gray matter, but not in white matter. Detected in liver, skeletal muscle and pancreas. Detected in lung adenocarcinoma cells with low metastatic potential, but not in lung adenocarcinoma cells with high metastatic potential.</text>
</comment>
<comment type="similarity">
    <text evidence="8">Belongs to the actin family. ARP3 subfamily.</text>
</comment>
<comment type="sequence caution" evidence="8">
    <conflict type="frameshift">
        <sequence resource="EMBL-CDS" id="AAP97150"/>
    </conflict>
</comment>
<sequence length="418" mass="47608">MAGSLPPCVVDCGTGYTKLGYAGNTEPQFIIPSCIAIRESAKVVDQAQRRVLRGVDDLDFFIGDEAIDKPTYATKWPIRHGIIEDWDLMERFMEQVVFKYLRAEPEDHYFLMTEPPLNTPENREYLAEIMFESFNVPGLYIAVQAVLALAASWTSRQVGERTLTGIVIDSGDGVTHVIPVAEGYVIGSCIKHIPIAGRDITYFIQQLLREREVGIPPEQSLETAKAIKEKYCYICPDIVKEFAKYDVDPRKWIKQYTGINAINQKKFVIDVGYERFLGPEIFFHPEFANPDFMESISDVVDEVIQNCPIDVRRPLYKNVVLSGGSTMFRDFGRRLQRDLKRVVDARLRLSEELSGGRIKPKPVEVQVVTHHMQRYAVWFGGSMLASTPEFFQVCHTKKDYEEYGPSICRHNPVFGVMS</sequence>
<keyword id="KW-0009">Actin-binding</keyword>
<keyword id="KW-0025">Alternative splicing</keyword>
<keyword id="KW-0067">ATP-binding</keyword>
<keyword id="KW-0966">Cell projection</keyword>
<keyword id="KW-0963">Cytoplasm</keyword>
<keyword id="KW-0206">Cytoskeleton</keyword>
<keyword id="KW-0547">Nucleotide-binding</keyword>
<keyword id="KW-1267">Proteomics identification</keyword>
<keyword id="KW-1185">Reference proteome</keyword>
<feature type="chain" id="PRO_0000342358" description="Actin-related protein 3B">
    <location>
        <begin position="1"/>
        <end position="418"/>
    </location>
</feature>
<feature type="splice variant" id="VSP_034418" description="In isoform 2." evidence="5 7">
    <location>
        <begin position="1"/>
        <end position="88"/>
    </location>
</feature>
<feature type="splice variant" id="VSP_041474" description="In isoform 3." evidence="6">
    <location>
        <begin position="318"/>
        <end position="387"/>
    </location>
</feature>
<feature type="sequence variant" id="VAR_048188" description="In dbSNP:rs2260545.">
    <original>R</original>
    <variation>Q</variation>
    <location>
        <position position="250"/>
    </location>
</feature>
<proteinExistence type="evidence at protein level"/>
<gene>
    <name type="primary">ACTR3B</name>
    <name type="synonym">ARP11</name>
    <name type="synonym">ARP4</name>
</gene>
<reference key="1">
    <citation type="journal article" date="2000" name="Eur. J. Biochem.">
        <title>ARP3beta, the gene encoding a new human actin-related protein, is alternatively spliced and predominantly expressed in brain neuronal cells.</title>
        <authorList>
            <person name="Jay P."/>
            <person name="Berge-Lefranc J.-L."/>
            <person name="Massacrier A."/>
            <person name="Roessler E."/>
            <person name="Wallis D."/>
            <person name="Muenke M."/>
            <person name="Gastaldi M."/>
            <person name="Taviaux S."/>
            <person name="Cau P."/>
            <person name="Berta P."/>
        </authorList>
    </citation>
    <scope>NUCLEOTIDE SEQUENCE [MRNA] (ISOFORM 1)</scope>
    <scope>ALTERNATIVE SPLICING</scope>
    <scope>TISSUE SPECIFICITY</scope>
    <source>
        <tissue>Embryo</tissue>
    </source>
</reference>
<reference key="2">
    <citation type="submission" date="2003-07" db="EMBL/GenBank/DDBJ databases">
        <title>Cloning of a novel human cDNA homology to human actin-related protein Arp3(ARP3) mRNA.</title>
        <authorList>
            <person name="Ding J.B."/>
            <person name="Yu L."/>
            <person name="Zhang M."/>
            <person name="Dai F.Y."/>
            <person name="Jiang J.X."/>
            <person name="Zhao S.Y."/>
        </authorList>
    </citation>
    <scope>NUCLEOTIDE SEQUENCE [MRNA] (ISOFORM 2)</scope>
</reference>
<reference key="3">
    <citation type="journal article" date="2004" name="Nat. Genet.">
        <title>Complete sequencing and characterization of 21,243 full-length human cDNAs.</title>
        <authorList>
            <person name="Ota T."/>
            <person name="Suzuki Y."/>
            <person name="Nishikawa T."/>
            <person name="Otsuki T."/>
            <person name="Sugiyama T."/>
            <person name="Irie R."/>
            <person name="Wakamatsu A."/>
            <person name="Hayashi K."/>
            <person name="Sato H."/>
            <person name="Nagai K."/>
            <person name="Kimura K."/>
            <person name="Makita H."/>
            <person name="Sekine M."/>
            <person name="Obayashi M."/>
            <person name="Nishi T."/>
            <person name="Shibahara T."/>
            <person name="Tanaka T."/>
            <person name="Ishii S."/>
            <person name="Yamamoto J."/>
            <person name="Saito K."/>
            <person name="Kawai Y."/>
            <person name="Isono Y."/>
            <person name="Nakamura Y."/>
            <person name="Nagahari K."/>
            <person name="Murakami K."/>
            <person name="Yasuda T."/>
            <person name="Iwayanagi T."/>
            <person name="Wagatsuma M."/>
            <person name="Shiratori A."/>
            <person name="Sudo H."/>
            <person name="Hosoiri T."/>
            <person name="Kaku Y."/>
            <person name="Kodaira H."/>
            <person name="Kondo H."/>
            <person name="Sugawara M."/>
            <person name="Takahashi M."/>
            <person name="Kanda K."/>
            <person name="Yokoi T."/>
            <person name="Furuya T."/>
            <person name="Kikkawa E."/>
            <person name="Omura Y."/>
            <person name="Abe K."/>
            <person name="Kamihara K."/>
            <person name="Katsuta N."/>
            <person name="Sato K."/>
            <person name="Tanikawa M."/>
            <person name="Yamazaki M."/>
            <person name="Ninomiya K."/>
            <person name="Ishibashi T."/>
            <person name="Yamashita H."/>
            <person name="Murakawa K."/>
            <person name="Fujimori K."/>
            <person name="Tanai H."/>
            <person name="Kimata M."/>
            <person name="Watanabe M."/>
            <person name="Hiraoka S."/>
            <person name="Chiba Y."/>
            <person name="Ishida S."/>
            <person name="Ono Y."/>
            <person name="Takiguchi S."/>
            <person name="Watanabe S."/>
            <person name="Yosida M."/>
            <person name="Hotuta T."/>
            <person name="Kusano J."/>
            <person name="Kanehori K."/>
            <person name="Takahashi-Fujii A."/>
            <person name="Hara H."/>
            <person name="Tanase T.-O."/>
            <person name="Nomura Y."/>
            <person name="Togiya S."/>
            <person name="Komai F."/>
            <person name="Hara R."/>
            <person name="Takeuchi K."/>
            <person name="Arita M."/>
            <person name="Imose N."/>
            <person name="Musashino K."/>
            <person name="Yuuki H."/>
            <person name="Oshima A."/>
            <person name="Sasaki N."/>
            <person name="Aotsuka S."/>
            <person name="Yoshikawa Y."/>
            <person name="Matsunawa H."/>
            <person name="Ichihara T."/>
            <person name="Shiohata N."/>
            <person name="Sano S."/>
            <person name="Moriya S."/>
            <person name="Momiyama H."/>
            <person name="Satoh N."/>
            <person name="Takami S."/>
            <person name="Terashima Y."/>
            <person name="Suzuki O."/>
            <person name="Nakagawa S."/>
            <person name="Senoh A."/>
            <person name="Mizoguchi H."/>
            <person name="Goto Y."/>
            <person name="Shimizu F."/>
            <person name="Wakebe H."/>
            <person name="Hishigaki H."/>
            <person name="Watanabe T."/>
            <person name="Sugiyama A."/>
            <person name="Takemoto M."/>
            <person name="Kawakami B."/>
            <person name="Yamazaki M."/>
            <person name="Watanabe K."/>
            <person name="Kumagai A."/>
            <person name="Itakura S."/>
            <person name="Fukuzumi Y."/>
            <person name="Fujimori Y."/>
            <person name="Komiyama M."/>
            <person name="Tashiro H."/>
            <person name="Tanigami A."/>
            <person name="Fujiwara T."/>
            <person name="Ono T."/>
            <person name="Yamada K."/>
            <person name="Fujii Y."/>
            <person name="Ozaki K."/>
            <person name="Hirao M."/>
            <person name="Ohmori Y."/>
            <person name="Kawabata A."/>
            <person name="Hikiji T."/>
            <person name="Kobatake N."/>
            <person name="Inagaki H."/>
            <person name="Ikema Y."/>
            <person name="Okamoto S."/>
            <person name="Okitani R."/>
            <person name="Kawakami T."/>
            <person name="Noguchi S."/>
            <person name="Itoh T."/>
            <person name="Shigeta K."/>
            <person name="Senba T."/>
            <person name="Matsumura K."/>
            <person name="Nakajima Y."/>
            <person name="Mizuno T."/>
            <person name="Morinaga M."/>
            <person name="Sasaki M."/>
            <person name="Togashi T."/>
            <person name="Oyama M."/>
            <person name="Hata H."/>
            <person name="Watanabe M."/>
            <person name="Komatsu T."/>
            <person name="Mizushima-Sugano J."/>
            <person name="Satoh T."/>
            <person name="Shirai Y."/>
            <person name="Takahashi Y."/>
            <person name="Nakagawa K."/>
            <person name="Okumura K."/>
            <person name="Nagase T."/>
            <person name="Nomura N."/>
            <person name="Kikuchi H."/>
            <person name="Masuho Y."/>
            <person name="Yamashita R."/>
            <person name="Nakai K."/>
            <person name="Yada T."/>
            <person name="Nakamura Y."/>
            <person name="Ohara O."/>
            <person name="Isogai T."/>
            <person name="Sugano S."/>
        </authorList>
    </citation>
    <scope>NUCLEOTIDE SEQUENCE [LARGE SCALE MRNA] (ISOFORMS 1 AND 2)</scope>
    <source>
        <tissue>Amygdala</tissue>
        <tissue>Peripheral blood</tissue>
    </source>
</reference>
<reference key="4">
    <citation type="journal article" date="2003" name="Nature">
        <title>The DNA sequence of human chromosome 7.</title>
        <authorList>
            <person name="Hillier L.W."/>
            <person name="Fulton R.S."/>
            <person name="Fulton L.A."/>
            <person name="Graves T.A."/>
            <person name="Pepin K.H."/>
            <person name="Wagner-McPherson C."/>
            <person name="Layman D."/>
            <person name="Maas J."/>
            <person name="Jaeger S."/>
            <person name="Walker R."/>
            <person name="Wylie K."/>
            <person name="Sekhon M."/>
            <person name="Becker M.C."/>
            <person name="O'Laughlin M.D."/>
            <person name="Schaller M.E."/>
            <person name="Fewell G.A."/>
            <person name="Delehaunty K.D."/>
            <person name="Miner T.L."/>
            <person name="Nash W.E."/>
            <person name="Cordes M."/>
            <person name="Du H."/>
            <person name="Sun H."/>
            <person name="Edwards J."/>
            <person name="Bradshaw-Cordum H."/>
            <person name="Ali J."/>
            <person name="Andrews S."/>
            <person name="Isak A."/>
            <person name="Vanbrunt A."/>
            <person name="Nguyen C."/>
            <person name="Du F."/>
            <person name="Lamar B."/>
            <person name="Courtney L."/>
            <person name="Kalicki J."/>
            <person name="Ozersky P."/>
            <person name="Bielicki L."/>
            <person name="Scott K."/>
            <person name="Holmes A."/>
            <person name="Harkins R."/>
            <person name="Harris A."/>
            <person name="Strong C.M."/>
            <person name="Hou S."/>
            <person name="Tomlinson C."/>
            <person name="Dauphin-Kohlberg S."/>
            <person name="Kozlowicz-Reilly A."/>
            <person name="Leonard S."/>
            <person name="Rohlfing T."/>
            <person name="Rock S.M."/>
            <person name="Tin-Wollam A.-M."/>
            <person name="Abbott A."/>
            <person name="Minx P."/>
            <person name="Maupin R."/>
            <person name="Strowmatt C."/>
            <person name="Latreille P."/>
            <person name="Miller N."/>
            <person name="Johnson D."/>
            <person name="Murray J."/>
            <person name="Woessner J.P."/>
            <person name="Wendl M.C."/>
            <person name="Yang S.-P."/>
            <person name="Schultz B.R."/>
            <person name="Wallis J.W."/>
            <person name="Spieth J."/>
            <person name="Bieri T.A."/>
            <person name="Nelson J.O."/>
            <person name="Berkowicz N."/>
            <person name="Wohldmann P.E."/>
            <person name="Cook L.L."/>
            <person name="Hickenbotham M.T."/>
            <person name="Eldred J."/>
            <person name="Williams D."/>
            <person name="Bedell J.A."/>
            <person name="Mardis E.R."/>
            <person name="Clifton S.W."/>
            <person name="Chissoe S.L."/>
            <person name="Marra M.A."/>
            <person name="Raymond C."/>
            <person name="Haugen E."/>
            <person name="Gillett W."/>
            <person name="Zhou Y."/>
            <person name="James R."/>
            <person name="Phelps K."/>
            <person name="Iadanoto S."/>
            <person name="Bubb K."/>
            <person name="Simms E."/>
            <person name="Levy R."/>
            <person name="Clendenning J."/>
            <person name="Kaul R."/>
            <person name="Kent W.J."/>
            <person name="Furey T.S."/>
            <person name="Baertsch R.A."/>
            <person name="Brent M.R."/>
            <person name="Keibler E."/>
            <person name="Flicek P."/>
            <person name="Bork P."/>
            <person name="Suyama M."/>
            <person name="Bailey J.A."/>
            <person name="Portnoy M.E."/>
            <person name="Torrents D."/>
            <person name="Chinwalla A.T."/>
            <person name="Gish W.R."/>
            <person name="Eddy S.R."/>
            <person name="McPherson J.D."/>
            <person name="Olson M.V."/>
            <person name="Eichler E.E."/>
            <person name="Green E.D."/>
            <person name="Waterston R.H."/>
            <person name="Wilson R.K."/>
        </authorList>
    </citation>
    <scope>NUCLEOTIDE SEQUENCE [LARGE SCALE GENOMIC DNA]</scope>
</reference>
<reference key="5">
    <citation type="journal article" date="2004" name="Genome Res.">
        <title>The status, quality, and expansion of the NIH full-length cDNA project: the Mammalian Gene Collection (MGC).</title>
        <authorList>
            <consortium name="The MGC Project Team"/>
        </authorList>
    </citation>
    <scope>NUCLEOTIDE SEQUENCE [LARGE SCALE MRNA] (ISOFORMS 1 AND 3)</scope>
    <source>
        <tissue>Colon</tissue>
        <tissue>Skin</tissue>
    </source>
</reference>
<reference key="6">
    <citation type="journal article" date="2001" name="Biochem. Biophys. Res. Commun.">
        <title>Isolation of a novel actin-related gene expressed in low-metastatic PC-14 human lung adenocarcinoma.</title>
        <authorList>
            <person name="Shindo-Okada N."/>
            <person name="Shimizu K."/>
        </authorList>
    </citation>
    <scope>TISSUE SPECIFICITY</scope>
</reference>
<reference key="7">
    <citation type="journal article" date="2003" name="Biochem. Biophys. Res. Commun.">
        <title>Expression of the Arp11 gene suppresses the tumorigenicity of PC-14 human lung adenocarcinoma cells.</title>
        <authorList>
            <person name="Shindo-Okada N."/>
            <person name="Iigo M."/>
        </authorList>
    </citation>
    <scope>FUNCTION</scope>
</reference>